<protein>
    <recommendedName>
        <fullName evidence="1">tRNA(Ile)-lysidine synthase</fullName>
        <ecNumber evidence="1">6.3.4.19</ecNumber>
    </recommendedName>
    <alternativeName>
        <fullName evidence="1">tRNA(Ile)-2-lysyl-cytidine synthase</fullName>
    </alternativeName>
    <alternativeName>
        <fullName evidence="1">tRNA(Ile)-lysidine synthetase</fullName>
    </alternativeName>
</protein>
<name>TILS_STAAR</name>
<reference key="1">
    <citation type="journal article" date="2004" name="Proc. Natl. Acad. Sci. U.S.A.">
        <title>Complete genomes of two clinical Staphylococcus aureus strains: evidence for the rapid evolution of virulence and drug resistance.</title>
        <authorList>
            <person name="Holden M.T.G."/>
            <person name="Feil E.J."/>
            <person name="Lindsay J.A."/>
            <person name="Peacock S.J."/>
            <person name="Day N.P.J."/>
            <person name="Enright M.C."/>
            <person name="Foster T.J."/>
            <person name="Moore C.E."/>
            <person name="Hurst L."/>
            <person name="Atkin R."/>
            <person name="Barron A."/>
            <person name="Bason N."/>
            <person name="Bentley S.D."/>
            <person name="Chillingworth C."/>
            <person name="Chillingworth T."/>
            <person name="Churcher C."/>
            <person name="Clark L."/>
            <person name="Corton C."/>
            <person name="Cronin A."/>
            <person name="Doggett J."/>
            <person name="Dowd L."/>
            <person name="Feltwell T."/>
            <person name="Hance Z."/>
            <person name="Harris B."/>
            <person name="Hauser H."/>
            <person name="Holroyd S."/>
            <person name="Jagels K."/>
            <person name="James K.D."/>
            <person name="Lennard N."/>
            <person name="Line A."/>
            <person name="Mayes R."/>
            <person name="Moule S."/>
            <person name="Mungall K."/>
            <person name="Ormond D."/>
            <person name="Quail M.A."/>
            <person name="Rabbinowitsch E."/>
            <person name="Rutherford K.M."/>
            <person name="Sanders M."/>
            <person name="Sharp S."/>
            <person name="Simmonds M."/>
            <person name="Stevens K."/>
            <person name="Whitehead S."/>
            <person name="Barrell B.G."/>
            <person name="Spratt B.G."/>
            <person name="Parkhill J."/>
        </authorList>
    </citation>
    <scope>NUCLEOTIDE SEQUENCE [LARGE SCALE GENOMIC DNA]</scope>
    <source>
        <strain>MRSA252</strain>
    </source>
</reference>
<sequence length="431" mass="51309">MQLNSNGWHVDDHIVVAVSTGIDSMCLLYQLLNDYKDSYRKLTCLHVNHGVRSASIEEARFLEAYCERHHIDLHIKKLDLSHSLNRNNSIQNEARIKRYEWFDEMMNVLEADVLLTAHHLDDQLETIMYRIFNGKSTRNKLGFDELSKRNGYQIYRPLLAVSKKEIKQFQERYHIPYFEDESNKDNKYVRNDIRNRIIPAIDENNQLKVSHLLKLKQWHDEQYDILQYSAKQFIQEFVKFDEQSKYLEVSRQAFNNLPNSLKMVVLDCLLSKYYELFNISAKTYEEWFKQFSSKKAQFSINLTDKWIIQIAYGKLIIMAKNNGDTYFRVQTIEKPGNYIFNKYRLEIHSNLPKCLFPLTVRTRQSGDTFKLNGRDGYKKVNRLFIDCKVQQWVRDQMPIVLDKQQRIIAVGDLYQQQTIKQWIIISKNGDE</sequence>
<dbReference type="EC" id="6.3.4.19" evidence="1"/>
<dbReference type="EMBL" id="BX571856">
    <property type="protein sequence ID" value="CAG39532.1"/>
    <property type="molecule type" value="Genomic_DNA"/>
</dbReference>
<dbReference type="RefSeq" id="WP_001176721.1">
    <property type="nucleotide sequence ID" value="NC_002952.2"/>
</dbReference>
<dbReference type="SMR" id="Q6GJG2"/>
<dbReference type="KEGG" id="sar:SAR0510"/>
<dbReference type="HOGENOM" id="CLU_018869_0_2_9"/>
<dbReference type="Proteomes" id="UP000000596">
    <property type="component" value="Chromosome"/>
</dbReference>
<dbReference type="GO" id="GO:0005737">
    <property type="term" value="C:cytoplasm"/>
    <property type="evidence" value="ECO:0007669"/>
    <property type="project" value="UniProtKB-SubCell"/>
</dbReference>
<dbReference type="GO" id="GO:0005524">
    <property type="term" value="F:ATP binding"/>
    <property type="evidence" value="ECO:0007669"/>
    <property type="project" value="UniProtKB-KW"/>
</dbReference>
<dbReference type="GO" id="GO:0032267">
    <property type="term" value="F:tRNA(Ile)-lysidine synthase activity"/>
    <property type="evidence" value="ECO:0007669"/>
    <property type="project" value="UniProtKB-EC"/>
</dbReference>
<dbReference type="GO" id="GO:0006400">
    <property type="term" value="P:tRNA modification"/>
    <property type="evidence" value="ECO:0007669"/>
    <property type="project" value="UniProtKB-UniRule"/>
</dbReference>
<dbReference type="CDD" id="cd01992">
    <property type="entry name" value="TilS_N"/>
    <property type="match status" value="1"/>
</dbReference>
<dbReference type="Gene3D" id="3.40.50.620">
    <property type="entry name" value="HUPs"/>
    <property type="match status" value="1"/>
</dbReference>
<dbReference type="HAMAP" id="MF_01161">
    <property type="entry name" value="tRNA_Ile_lys_synt"/>
    <property type="match status" value="1"/>
</dbReference>
<dbReference type="InterPro" id="IPR012796">
    <property type="entry name" value="Lysidine-tRNA-synth_C"/>
</dbReference>
<dbReference type="InterPro" id="IPR014729">
    <property type="entry name" value="Rossmann-like_a/b/a_fold"/>
</dbReference>
<dbReference type="InterPro" id="IPR011063">
    <property type="entry name" value="TilS/TtcA_N"/>
</dbReference>
<dbReference type="InterPro" id="IPR012094">
    <property type="entry name" value="tRNA_Ile_lys_synt"/>
</dbReference>
<dbReference type="InterPro" id="IPR012795">
    <property type="entry name" value="tRNA_Ile_lys_synt_N"/>
</dbReference>
<dbReference type="NCBIfam" id="TIGR02433">
    <property type="entry name" value="lysidine_TilS_C"/>
    <property type="match status" value="1"/>
</dbReference>
<dbReference type="NCBIfam" id="TIGR02432">
    <property type="entry name" value="lysidine_TilS_N"/>
    <property type="match status" value="1"/>
</dbReference>
<dbReference type="PANTHER" id="PTHR43033">
    <property type="entry name" value="TRNA(ILE)-LYSIDINE SYNTHASE-RELATED"/>
    <property type="match status" value="1"/>
</dbReference>
<dbReference type="PANTHER" id="PTHR43033:SF1">
    <property type="entry name" value="TRNA(ILE)-LYSIDINE SYNTHASE-RELATED"/>
    <property type="match status" value="1"/>
</dbReference>
<dbReference type="Pfam" id="PF01171">
    <property type="entry name" value="ATP_bind_3"/>
    <property type="match status" value="1"/>
</dbReference>
<dbReference type="Pfam" id="PF11734">
    <property type="entry name" value="TilS_C"/>
    <property type="match status" value="1"/>
</dbReference>
<dbReference type="SMART" id="SM00977">
    <property type="entry name" value="TilS_C"/>
    <property type="match status" value="1"/>
</dbReference>
<dbReference type="SUPFAM" id="SSF52402">
    <property type="entry name" value="Adenine nucleotide alpha hydrolases-like"/>
    <property type="match status" value="1"/>
</dbReference>
<dbReference type="SUPFAM" id="SSF56037">
    <property type="entry name" value="PheT/TilS domain"/>
    <property type="match status" value="1"/>
</dbReference>
<gene>
    <name evidence="1" type="primary">tilS</name>
    <name type="ordered locus">SAR0510</name>
</gene>
<proteinExistence type="inferred from homology"/>
<organism>
    <name type="scientific">Staphylococcus aureus (strain MRSA252)</name>
    <dbReference type="NCBI Taxonomy" id="282458"/>
    <lineage>
        <taxon>Bacteria</taxon>
        <taxon>Bacillati</taxon>
        <taxon>Bacillota</taxon>
        <taxon>Bacilli</taxon>
        <taxon>Bacillales</taxon>
        <taxon>Staphylococcaceae</taxon>
        <taxon>Staphylococcus</taxon>
    </lineage>
</organism>
<feature type="chain" id="PRO_0000181768" description="tRNA(Ile)-lysidine synthase">
    <location>
        <begin position="1"/>
        <end position="431"/>
    </location>
</feature>
<feature type="binding site" evidence="1">
    <location>
        <begin position="19"/>
        <end position="24"/>
    </location>
    <ligand>
        <name>ATP</name>
        <dbReference type="ChEBI" id="CHEBI:30616"/>
    </ligand>
</feature>
<keyword id="KW-0067">ATP-binding</keyword>
<keyword id="KW-0963">Cytoplasm</keyword>
<keyword id="KW-0436">Ligase</keyword>
<keyword id="KW-0547">Nucleotide-binding</keyword>
<keyword id="KW-0819">tRNA processing</keyword>
<evidence type="ECO:0000255" key="1">
    <source>
        <dbReference type="HAMAP-Rule" id="MF_01161"/>
    </source>
</evidence>
<comment type="function">
    <text evidence="1">Ligates lysine onto the cytidine present at position 34 of the AUA codon-specific tRNA(Ile) that contains the anticodon CAU, in an ATP-dependent manner. Cytidine is converted to lysidine, thus changing the amino acid specificity of the tRNA from methionine to isoleucine.</text>
</comment>
<comment type="catalytic activity">
    <reaction evidence="1">
        <text>cytidine(34) in tRNA(Ile2) + L-lysine + ATP = lysidine(34) in tRNA(Ile2) + AMP + diphosphate + H(+)</text>
        <dbReference type="Rhea" id="RHEA:43744"/>
        <dbReference type="Rhea" id="RHEA-COMP:10625"/>
        <dbReference type="Rhea" id="RHEA-COMP:10670"/>
        <dbReference type="ChEBI" id="CHEBI:15378"/>
        <dbReference type="ChEBI" id="CHEBI:30616"/>
        <dbReference type="ChEBI" id="CHEBI:32551"/>
        <dbReference type="ChEBI" id="CHEBI:33019"/>
        <dbReference type="ChEBI" id="CHEBI:82748"/>
        <dbReference type="ChEBI" id="CHEBI:83665"/>
        <dbReference type="ChEBI" id="CHEBI:456215"/>
        <dbReference type="EC" id="6.3.4.19"/>
    </reaction>
</comment>
<comment type="subcellular location">
    <subcellularLocation>
        <location evidence="1">Cytoplasm</location>
    </subcellularLocation>
</comment>
<comment type="domain">
    <text>The N-terminal region contains the highly conserved SGGXDS motif, predicted to be a P-loop motif involved in ATP binding.</text>
</comment>
<comment type="similarity">
    <text evidence="1">Belongs to the tRNA(Ile)-lysidine synthase family.</text>
</comment>
<accession>Q6GJG2</accession>